<protein>
    <recommendedName>
        <fullName evidence="1">Holliday junction branch migration complex subunit RuvB</fullName>
        <ecNumber evidence="1">3.6.4.-</ecNumber>
    </recommendedName>
</protein>
<evidence type="ECO:0000255" key="1">
    <source>
        <dbReference type="HAMAP-Rule" id="MF_00016"/>
    </source>
</evidence>
<evidence type="ECO:0000256" key="2">
    <source>
        <dbReference type="SAM" id="MobiDB-lite"/>
    </source>
</evidence>
<proteinExistence type="inferred from homology"/>
<sequence length="361" mass="38584">MNWDETGPETDEPTGPVLDDRLVDADADGEDTAVEAALRPKDLEEFVGQEKVREQLDLVLKAARARGATADHVLLSGAPGLGKTTLSMIIAAEMNAPIRITSGPAIQHAGDLAAILSSLQEGEVLFLDEIHRMSRPAEEMLYMAMEDFRVDVIVGKGPGATAIPLELPPFTLVGATTRAGLLPPPLRDRFGFTGHMEFYAPAELERVLHRSARLLDVGIDGEGAAEIAGRSRGTPRIANRLLRRVRDYAQVKAEGTIDRSIAMAALKVYEVDARGLDRLDRAVLGALLKLFGGGPVGLSTLAVAVGEERETVEEVAEPFLVREGLLARTPRGRVATPAAWAHLGLVPPQHGAKGQQGLFGA</sequence>
<keyword id="KW-0067">ATP-binding</keyword>
<keyword id="KW-0963">Cytoplasm</keyword>
<keyword id="KW-0227">DNA damage</keyword>
<keyword id="KW-0233">DNA recombination</keyword>
<keyword id="KW-0234">DNA repair</keyword>
<keyword id="KW-0238">DNA-binding</keyword>
<keyword id="KW-0378">Hydrolase</keyword>
<keyword id="KW-0547">Nucleotide-binding</keyword>
<name>RUVB_STRGG</name>
<gene>
    <name evidence="1" type="primary">ruvB</name>
    <name type="ordered locus">SGR_6017</name>
</gene>
<accession>B1W3G4</accession>
<comment type="function">
    <text evidence="1">The RuvA-RuvB-RuvC complex processes Holliday junction (HJ) DNA during genetic recombination and DNA repair, while the RuvA-RuvB complex plays an important role in the rescue of blocked DNA replication forks via replication fork reversal (RFR). RuvA specifically binds to HJ cruciform DNA, conferring on it an open structure. The RuvB hexamer acts as an ATP-dependent pump, pulling dsDNA into and through the RuvAB complex. RuvB forms 2 homohexamers on either side of HJ DNA bound by 1 or 2 RuvA tetramers; 4 subunits per hexamer contact DNA at a time. Coordinated motions by a converter formed by DNA-disengaged RuvB subunits stimulates ATP hydrolysis and nucleotide exchange. Immobilization of the converter enables RuvB to convert the ATP-contained energy into a lever motion, pulling 2 nucleotides of DNA out of the RuvA tetramer per ATP hydrolyzed, thus driving DNA branch migration. The RuvB motors rotate together with the DNA substrate, which together with the progressing nucleotide cycle form the mechanistic basis for DNA recombination by continuous HJ branch migration. Branch migration allows RuvC to scan DNA until it finds its consensus sequence, where it cleaves and resolves cruciform DNA.</text>
</comment>
<comment type="catalytic activity">
    <reaction evidence="1">
        <text>ATP + H2O = ADP + phosphate + H(+)</text>
        <dbReference type="Rhea" id="RHEA:13065"/>
        <dbReference type="ChEBI" id="CHEBI:15377"/>
        <dbReference type="ChEBI" id="CHEBI:15378"/>
        <dbReference type="ChEBI" id="CHEBI:30616"/>
        <dbReference type="ChEBI" id="CHEBI:43474"/>
        <dbReference type="ChEBI" id="CHEBI:456216"/>
    </reaction>
</comment>
<comment type="subunit">
    <text evidence="1">Homohexamer. Forms an RuvA(8)-RuvB(12)-Holliday junction (HJ) complex. HJ DNA is sandwiched between 2 RuvA tetramers; dsDNA enters through RuvA and exits via RuvB. An RuvB hexamer assembles on each DNA strand where it exits the tetramer. Each RuvB hexamer is contacted by two RuvA subunits (via domain III) on 2 adjacent RuvB subunits; this complex drives branch migration. In the full resolvosome a probable DNA-RuvA(4)-RuvB(12)-RuvC(2) complex forms which resolves the HJ.</text>
</comment>
<comment type="subcellular location">
    <subcellularLocation>
        <location evidence="1">Cytoplasm</location>
    </subcellularLocation>
</comment>
<comment type="domain">
    <text evidence="1">Has 3 domains, the large (RuvB-L) and small ATPase (RuvB-S) domains and the C-terminal head (RuvB-H) domain. The head domain binds DNA, while the ATPase domains jointly bind ATP, ADP or are empty depending on the state of the subunit in the translocation cycle. During a single DNA translocation step the structure of each domain remains the same, but their relative positions change.</text>
</comment>
<comment type="similarity">
    <text evidence="1">Belongs to the RuvB family.</text>
</comment>
<feature type="chain" id="PRO_1000089680" description="Holliday junction branch migration complex subunit RuvB">
    <location>
        <begin position="1"/>
        <end position="361"/>
    </location>
</feature>
<feature type="region of interest" description="Disordered" evidence="2">
    <location>
        <begin position="1"/>
        <end position="21"/>
    </location>
</feature>
<feature type="region of interest" description="Large ATPase domain (RuvB-L)" evidence="1">
    <location>
        <begin position="13"/>
        <end position="199"/>
    </location>
</feature>
<feature type="region of interest" description="Small ATPAse domain (RuvB-S)" evidence="1">
    <location>
        <begin position="200"/>
        <end position="270"/>
    </location>
</feature>
<feature type="region of interest" description="Head domain (RuvB-H)" evidence="1">
    <location>
        <begin position="273"/>
        <end position="361"/>
    </location>
</feature>
<feature type="compositionally biased region" description="Acidic residues" evidence="2">
    <location>
        <begin position="1"/>
        <end position="12"/>
    </location>
</feature>
<feature type="binding site" evidence="1">
    <location>
        <position position="38"/>
    </location>
    <ligand>
        <name>ATP</name>
        <dbReference type="ChEBI" id="CHEBI:30616"/>
    </ligand>
</feature>
<feature type="binding site" evidence="1">
    <location>
        <position position="39"/>
    </location>
    <ligand>
        <name>ATP</name>
        <dbReference type="ChEBI" id="CHEBI:30616"/>
    </ligand>
</feature>
<feature type="binding site" evidence="1">
    <location>
        <position position="80"/>
    </location>
    <ligand>
        <name>ATP</name>
        <dbReference type="ChEBI" id="CHEBI:30616"/>
    </ligand>
</feature>
<feature type="binding site" evidence="1">
    <location>
        <position position="83"/>
    </location>
    <ligand>
        <name>ATP</name>
        <dbReference type="ChEBI" id="CHEBI:30616"/>
    </ligand>
</feature>
<feature type="binding site" evidence="1">
    <location>
        <position position="84"/>
    </location>
    <ligand>
        <name>ATP</name>
        <dbReference type="ChEBI" id="CHEBI:30616"/>
    </ligand>
</feature>
<feature type="binding site" evidence="1">
    <location>
        <position position="84"/>
    </location>
    <ligand>
        <name>Mg(2+)</name>
        <dbReference type="ChEBI" id="CHEBI:18420"/>
    </ligand>
</feature>
<feature type="binding site" evidence="1">
    <location>
        <position position="85"/>
    </location>
    <ligand>
        <name>ATP</name>
        <dbReference type="ChEBI" id="CHEBI:30616"/>
    </ligand>
</feature>
<feature type="binding site" evidence="1">
    <location>
        <begin position="146"/>
        <end position="148"/>
    </location>
    <ligand>
        <name>ATP</name>
        <dbReference type="ChEBI" id="CHEBI:30616"/>
    </ligand>
</feature>
<feature type="binding site" evidence="1">
    <location>
        <position position="189"/>
    </location>
    <ligand>
        <name>ATP</name>
        <dbReference type="ChEBI" id="CHEBI:30616"/>
    </ligand>
</feature>
<feature type="binding site" evidence="1">
    <location>
        <position position="199"/>
    </location>
    <ligand>
        <name>ATP</name>
        <dbReference type="ChEBI" id="CHEBI:30616"/>
    </ligand>
</feature>
<feature type="binding site" evidence="1">
    <location>
        <position position="236"/>
    </location>
    <ligand>
        <name>ATP</name>
        <dbReference type="ChEBI" id="CHEBI:30616"/>
    </ligand>
</feature>
<feature type="binding site" evidence="1">
    <location>
        <position position="309"/>
    </location>
    <ligand>
        <name>DNA</name>
        <dbReference type="ChEBI" id="CHEBI:16991"/>
    </ligand>
</feature>
<feature type="binding site" evidence="1">
    <location>
        <position position="328"/>
    </location>
    <ligand>
        <name>DNA</name>
        <dbReference type="ChEBI" id="CHEBI:16991"/>
    </ligand>
</feature>
<feature type="binding site" evidence="1">
    <location>
        <position position="333"/>
    </location>
    <ligand>
        <name>DNA</name>
        <dbReference type="ChEBI" id="CHEBI:16991"/>
    </ligand>
</feature>
<dbReference type="EC" id="3.6.4.-" evidence="1"/>
<dbReference type="EMBL" id="AP009493">
    <property type="protein sequence ID" value="BAG22846.1"/>
    <property type="molecule type" value="Genomic_DNA"/>
</dbReference>
<dbReference type="RefSeq" id="WP_003970330.1">
    <property type="nucleotide sequence ID" value="NC_010572.1"/>
</dbReference>
<dbReference type="SMR" id="B1W3G4"/>
<dbReference type="KEGG" id="sgr:SGR_6017"/>
<dbReference type="eggNOG" id="COG2255">
    <property type="taxonomic scope" value="Bacteria"/>
</dbReference>
<dbReference type="HOGENOM" id="CLU_055599_1_0_11"/>
<dbReference type="Proteomes" id="UP000001685">
    <property type="component" value="Chromosome"/>
</dbReference>
<dbReference type="GO" id="GO:0005737">
    <property type="term" value="C:cytoplasm"/>
    <property type="evidence" value="ECO:0007669"/>
    <property type="project" value="UniProtKB-SubCell"/>
</dbReference>
<dbReference type="GO" id="GO:0048476">
    <property type="term" value="C:Holliday junction resolvase complex"/>
    <property type="evidence" value="ECO:0007669"/>
    <property type="project" value="UniProtKB-UniRule"/>
</dbReference>
<dbReference type="GO" id="GO:0005524">
    <property type="term" value="F:ATP binding"/>
    <property type="evidence" value="ECO:0007669"/>
    <property type="project" value="UniProtKB-UniRule"/>
</dbReference>
<dbReference type="GO" id="GO:0016887">
    <property type="term" value="F:ATP hydrolysis activity"/>
    <property type="evidence" value="ECO:0007669"/>
    <property type="project" value="InterPro"/>
</dbReference>
<dbReference type="GO" id="GO:0000400">
    <property type="term" value="F:four-way junction DNA binding"/>
    <property type="evidence" value="ECO:0007669"/>
    <property type="project" value="UniProtKB-UniRule"/>
</dbReference>
<dbReference type="GO" id="GO:0009378">
    <property type="term" value="F:four-way junction helicase activity"/>
    <property type="evidence" value="ECO:0007669"/>
    <property type="project" value="InterPro"/>
</dbReference>
<dbReference type="GO" id="GO:0006310">
    <property type="term" value="P:DNA recombination"/>
    <property type="evidence" value="ECO:0007669"/>
    <property type="project" value="UniProtKB-UniRule"/>
</dbReference>
<dbReference type="GO" id="GO:0006281">
    <property type="term" value="P:DNA repair"/>
    <property type="evidence" value="ECO:0007669"/>
    <property type="project" value="UniProtKB-UniRule"/>
</dbReference>
<dbReference type="CDD" id="cd00009">
    <property type="entry name" value="AAA"/>
    <property type="match status" value="1"/>
</dbReference>
<dbReference type="Gene3D" id="1.10.8.60">
    <property type="match status" value="1"/>
</dbReference>
<dbReference type="Gene3D" id="3.40.50.300">
    <property type="entry name" value="P-loop containing nucleotide triphosphate hydrolases"/>
    <property type="match status" value="1"/>
</dbReference>
<dbReference type="Gene3D" id="1.10.10.10">
    <property type="entry name" value="Winged helix-like DNA-binding domain superfamily/Winged helix DNA-binding domain"/>
    <property type="match status" value="1"/>
</dbReference>
<dbReference type="HAMAP" id="MF_00016">
    <property type="entry name" value="DNA_HJ_migration_RuvB"/>
    <property type="match status" value="1"/>
</dbReference>
<dbReference type="InterPro" id="IPR003593">
    <property type="entry name" value="AAA+_ATPase"/>
</dbReference>
<dbReference type="InterPro" id="IPR041445">
    <property type="entry name" value="AAA_lid_4"/>
</dbReference>
<dbReference type="InterPro" id="IPR004605">
    <property type="entry name" value="DNA_helicase_Holl-junc_RuvB"/>
</dbReference>
<dbReference type="InterPro" id="IPR027417">
    <property type="entry name" value="P-loop_NTPase"/>
</dbReference>
<dbReference type="InterPro" id="IPR008824">
    <property type="entry name" value="RuvB-like_N"/>
</dbReference>
<dbReference type="InterPro" id="IPR008823">
    <property type="entry name" value="RuvB_C"/>
</dbReference>
<dbReference type="InterPro" id="IPR036388">
    <property type="entry name" value="WH-like_DNA-bd_sf"/>
</dbReference>
<dbReference type="InterPro" id="IPR036390">
    <property type="entry name" value="WH_DNA-bd_sf"/>
</dbReference>
<dbReference type="NCBIfam" id="NF000868">
    <property type="entry name" value="PRK00080.1"/>
    <property type="match status" value="1"/>
</dbReference>
<dbReference type="NCBIfam" id="TIGR00635">
    <property type="entry name" value="ruvB"/>
    <property type="match status" value="1"/>
</dbReference>
<dbReference type="PANTHER" id="PTHR42848">
    <property type="match status" value="1"/>
</dbReference>
<dbReference type="PANTHER" id="PTHR42848:SF1">
    <property type="entry name" value="HOLLIDAY JUNCTION BRANCH MIGRATION COMPLEX SUBUNIT RUVB"/>
    <property type="match status" value="1"/>
</dbReference>
<dbReference type="Pfam" id="PF17864">
    <property type="entry name" value="AAA_lid_4"/>
    <property type="match status" value="1"/>
</dbReference>
<dbReference type="Pfam" id="PF05491">
    <property type="entry name" value="RuvB_C"/>
    <property type="match status" value="1"/>
</dbReference>
<dbReference type="Pfam" id="PF05496">
    <property type="entry name" value="RuvB_N"/>
    <property type="match status" value="1"/>
</dbReference>
<dbReference type="SMART" id="SM00382">
    <property type="entry name" value="AAA"/>
    <property type="match status" value="1"/>
</dbReference>
<dbReference type="SUPFAM" id="SSF52540">
    <property type="entry name" value="P-loop containing nucleoside triphosphate hydrolases"/>
    <property type="match status" value="1"/>
</dbReference>
<dbReference type="SUPFAM" id="SSF46785">
    <property type="entry name" value="Winged helix' DNA-binding domain"/>
    <property type="match status" value="1"/>
</dbReference>
<reference key="1">
    <citation type="journal article" date="2008" name="J. Bacteriol.">
        <title>Genome sequence of the streptomycin-producing microorganism Streptomyces griseus IFO 13350.</title>
        <authorList>
            <person name="Ohnishi Y."/>
            <person name="Ishikawa J."/>
            <person name="Hara H."/>
            <person name="Suzuki H."/>
            <person name="Ikenoya M."/>
            <person name="Ikeda H."/>
            <person name="Yamashita A."/>
            <person name="Hattori M."/>
            <person name="Horinouchi S."/>
        </authorList>
    </citation>
    <scope>NUCLEOTIDE SEQUENCE [LARGE SCALE GENOMIC DNA]</scope>
    <source>
        <strain>JCM 4626 / CBS 651.72 / NBRC 13350 / KCC S-0626 / ISP 5235</strain>
    </source>
</reference>
<organism>
    <name type="scientific">Streptomyces griseus subsp. griseus (strain JCM 4626 / CBS 651.72 / NBRC 13350 / KCC S-0626 / ISP 5235)</name>
    <dbReference type="NCBI Taxonomy" id="455632"/>
    <lineage>
        <taxon>Bacteria</taxon>
        <taxon>Bacillati</taxon>
        <taxon>Actinomycetota</taxon>
        <taxon>Actinomycetes</taxon>
        <taxon>Kitasatosporales</taxon>
        <taxon>Streptomycetaceae</taxon>
        <taxon>Streptomyces</taxon>
    </lineage>
</organism>